<sequence length="564" mass="63163">MLSIVVLLLLMAEGSSQNYTGNPVICMGHHAVANGTMVKTLTDDQVEVVTAQELVESQNLPELCPSPLRLVDGQTCDIVNGALGSPGCDHLNGAEWDVFIERPSAVDTCYPFDVPDYQSLRSILANNGKFEFIAEEFQWSTVKQNGKSGACKRANINDFFNRLNWLVKSDGNAYPLQNLTKINNGDYARLYIWGVHHPSTDTEQTNLYKNNPGRVTVSTKTSQTSVVPNIGSRPLVRGQSGRISFYWTIVEPGDLIVFNTIGNLIAPRGHYKLNNQKKSTILNTAVPIGSCVSRCHTDKGSLSRTKPFQNISRIAIGDCPKYVKQGSLKLATGMRNIPEKASRGLFGAIAGFIENGWQGLIDGWYGFRHQNAEGTGTAADLKSTQAAIDQINGKLNRLIEKTNEKYHQIEKEFEQVEGRIQDLEKYVEDTKIDLWSYNAEFLVALENQHTIDVADSEMNKLFERVRRQLRENAEDKGNGCFEIFHKCDNNCIESIRNGTYDHDIYRDEAINNRFQIQGVKLTQGYKDIILWISFSISCFLLVALLLAFILWACQNGNIRCQICI</sequence>
<dbReference type="EMBL" id="M25286">
    <property type="protein sequence ID" value="AAA43219.1"/>
    <property type="molecule type" value="Genomic_RNA"/>
</dbReference>
<dbReference type="SMR" id="P19697"/>
<dbReference type="GlyCosmos" id="P19697">
    <property type="glycosylation" value="5 sites, No reported glycans"/>
</dbReference>
<dbReference type="GO" id="GO:0020002">
    <property type="term" value="C:host cell plasma membrane"/>
    <property type="evidence" value="ECO:0007669"/>
    <property type="project" value="UniProtKB-SubCell"/>
</dbReference>
<dbReference type="GO" id="GO:0016020">
    <property type="term" value="C:membrane"/>
    <property type="evidence" value="ECO:0007669"/>
    <property type="project" value="UniProtKB-UniRule"/>
</dbReference>
<dbReference type="GO" id="GO:0019031">
    <property type="term" value="C:viral envelope"/>
    <property type="evidence" value="ECO:0007669"/>
    <property type="project" value="UniProtKB-UniRule"/>
</dbReference>
<dbReference type="GO" id="GO:0055036">
    <property type="term" value="C:virion membrane"/>
    <property type="evidence" value="ECO:0007669"/>
    <property type="project" value="UniProtKB-SubCell"/>
</dbReference>
<dbReference type="GO" id="GO:0046789">
    <property type="term" value="F:host cell surface receptor binding"/>
    <property type="evidence" value="ECO:0007669"/>
    <property type="project" value="UniProtKB-UniRule"/>
</dbReference>
<dbReference type="GO" id="GO:0075512">
    <property type="term" value="P:clathrin-dependent endocytosis of virus by host cell"/>
    <property type="evidence" value="ECO:0007669"/>
    <property type="project" value="UniProtKB-UniRule"/>
</dbReference>
<dbReference type="GO" id="GO:0039654">
    <property type="term" value="P:fusion of virus membrane with host endosome membrane"/>
    <property type="evidence" value="ECO:0007669"/>
    <property type="project" value="UniProtKB-UniRule"/>
</dbReference>
<dbReference type="GO" id="GO:0019064">
    <property type="term" value="P:fusion of virus membrane with host plasma membrane"/>
    <property type="evidence" value="ECO:0007669"/>
    <property type="project" value="InterPro"/>
</dbReference>
<dbReference type="GO" id="GO:0046761">
    <property type="term" value="P:viral budding from plasma membrane"/>
    <property type="evidence" value="ECO:0007669"/>
    <property type="project" value="UniProtKB-UniRule"/>
</dbReference>
<dbReference type="GO" id="GO:0019062">
    <property type="term" value="P:virion attachment to host cell"/>
    <property type="evidence" value="ECO:0007669"/>
    <property type="project" value="UniProtKB-KW"/>
</dbReference>
<dbReference type="Gene3D" id="3.90.20.10">
    <property type="match status" value="1"/>
</dbReference>
<dbReference type="Gene3D" id="3.90.209.20">
    <property type="match status" value="1"/>
</dbReference>
<dbReference type="HAMAP" id="MF_04072">
    <property type="entry name" value="INFV_HEMA"/>
    <property type="match status" value="1"/>
</dbReference>
<dbReference type="InterPro" id="IPR008980">
    <property type="entry name" value="Capsid_hemagglutn"/>
</dbReference>
<dbReference type="InterPro" id="IPR013828">
    <property type="entry name" value="Hemagglutn_HA1_a/b_dom_sf"/>
</dbReference>
<dbReference type="InterPro" id="IPR000149">
    <property type="entry name" value="Hemagglutn_influenz_A"/>
</dbReference>
<dbReference type="InterPro" id="IPR001364">
    <property type="entry name" value="Hemagglutn_influenz_A/B"/>
</dbReference>
<dbReference type="Pfam" id="PF00509">
    <property type="entry name" value="Hemagglutinin"/>
    <property type="match status" value="1"/>
</dbReference>
<dbReference type="PRINTS" id="PR00330">
    <property type="entry name" value="HEMAGGLUTN1"/>
</dbReference>
<dbReference type="PRINTS" id="PR00329">
    <property type="entry name" value="HEMAGGLUTN12"/>
</dbReference>
<dbReference type="SUPFAM" id="SSF58064">
    <property type="entry name" value="Influenza hemagglutinin (stalk)"/>
    <property type="match status" value="1"/>
</dbReference>
<dbReference type="SUPFAM" id="SSF49818">
    <property type="entry name" value="Viral protein domain"/>
    <property type="match status" value="1"/>
</dbReference>
<organism>
    <name type="scientific">Influenza A virus (strain A/Duck/New Zealand/31/1976 H4N6)</name>
    <dbReference type="NCBI Taxonomy" id="385592"/>
    <lineage>
        <taxon>Viruses</taxon>
        <taxon>Riboviria</taxon>
        <taxon>Orthornavirae</taxon>
        <taxon>Negarnaviricota</taxon>
        <taxon>Polyploviricotina</taxon>
        <taxon>Insthoviricetes</taxon>
        <taxon>Articulavirales</taxon>
        <taxon>Orthomyxoviridae</taxon>
        <taxon>Alphainfluenzavirus</taxon>
        <taxon>Alphainfluenzavirus influenzae</taxon>
        <taxon>Influenza A virus</taxon>
    </lineage>
</organism>
<keyword id="KW-1167">Clathrin- and caveolin-independent endocytosis of virus by host</keyword>
<keyword id="KW-1165">Clathrin-mediated endocytosis of virus by host</keyword>
<keyword id="KW-1015">Disulfide bond</keyword>
<keyword id="KW-1170">Fusion of virus membrane with host endosomal membrane</keyword>
<keyword id="KW-1168">Fusion of virus membrane with host membrane</keyword>
<keyword id="KW-0325">Glycoprotein</keyword>
<keyword id="KW-0348">Hemagglutinin</keyword>
<keyword id="KW-1032">Host cell membrane</keyword>
<keyword id="KW-1043">Host membrane</keyword>
<keyword id="KW-0945">Host-virus interaction</keyword>
<keyword id="KW-0449">Lipoprotein</keyword>
<keyword id="KW-0472">Membrane</keyword>
<keyword id="KW-0564">Palmitate</keyword>
<keyword id="KW-0732">Signal</keyword>
<keyword id="KW-0812">Transmembrane</keyword>
<keyword id="KW-1133">Transmembrane helix</keyword>
<keyword id="KW-1161">Viral attachment to host cell</keyword>
<keyword id="KW-0261">Viral envelope protein</keyword>
<keyword id="KW-1162">Viral penetration into host cytoplasm</keyword>
<keyword id="KW-0946">Virion</keyword>
<keyword id="KW-1164">Virus endocytosis by host</keyword>
<keyword id="KW-1160">Virus entry into host cell</keyword>
<name>HEMA_I76AK</name>
<gene>
    <name evidence="1" type="primary">HA</name>
</gene>
<feature type="signal peptide" evidence="1">
    <location>
        <begin position="1"/>
        <end position="16"/>
    </location>
</feature>
<feature type="chain" id="PRO_0000440459" description="Hemagglutinin" evidence="1">
    <location>
        <begin position="17"/>
        <end position="564"/>
    </location>
</feature>
<feature type="chain" id="PRO_0000038943" description="Hemagglutinin HA1 chain">
    <location>
        <begin position="17"/>
        <end position="342"/>
    </location>
</feature>
<feature type="chain" id="PRO_0000038944" description="Hemagglutinin HA2 chain" evidence="1">
    <location>
        <begin position="344"/>
        <end position="564"/>
    </location>
</feature>
<feature type="topological domain" description="Extracellular" evidence="1">
    <location>
        <begin position="17"/>
        <end position="527"/>
    </location>
</feature>
<feature type="transmembrane region" description="Helical" evidence="1">
    <location>
        <begin position="528"/>
        <end position="548"/>
    </location>
</feature>
<feature type="topological domain" description="Cytoplasmic" evidence="1">
    <location>
        <begin position="549"/>
        <end position="564"/>
    </location>
</feature>
<feature type="site" description="Cleavage; by host" evidence="1">
    <location>
        <begin position="343"/>
        <end position="344"/>
    </location>
</feature>
<feature type="lipid moiety-binding region" description="S-palmitoyl cysteine; by host" evidence="1">
    <location>
        <position position="553"/>
    </location>
</feature>
<feature type="lipid moiety-binding region" description="S-palmitoyl cysteine; by host" evidence="1">
    <location>
        <position position="560"/>
    </location>
</feature>
<feature type="lipid moiety-binding region" description="S-palmitoyl cysteine; by host" evidence="1">
    <location>
        <position position="563"/>
    </location>
</feature>
<feature type="glycosylation site" description="N-linked (GlcNAc...) asparagine; by host" evidence="1">
    <location>
        <position position="18"/>
    </location>
</feature>
<feature type="glycosylation site" description="N-linked (GlcNAc...) asparagine; by host" evidence="1">
    <location>
        <position position="34"/>
    </location>
</feature>
<feature type="glycosylation site" description="N-linked (GlcNAc...) asparagine; by host" evidence="1">
    <location>
        <position position="178"/>
    </location>
</feature>
<feature type="glycosylation site" description="N-linked (GlcNAc...) asparagine; by host" evidence="1">
    <location>
        <position position="310"/>
    </location>
</feature>
<feature type="glycosylation site" description="N-linked (GlcNAc...) asparagine; by host" evidence="1">
    <location>
        <position position="497"/>
    </location>
</feature>
<feature type="disulfide bond" description="Interchain (between HA1 and HA2 chains)" evidence="1">
    <location>
        <begin position="26"/>
        <end position="480"/>
    </location>
</feature>
<feature type="disulfide bond" evidence="1">
    <location>
        <begin position="64"/>
        <end position="291"/>
    </location>
</feature>
<feature type="disulfide bond" evidence="1">
    <location>
        <begin position="76"/>
        <end position="88"/>
    </location>
</feature>
<feature type="disulfide bond" evidence="1">
    <location>
        <begin position="109"/>
        <end position="151"/>
    </location>
</feature>
<feature type="disulfide bond" evidence="1">
    <location>
        <begin position="295"/>
        <end position="319"/>
    </location>
</feature>
<feature type="disulfide bond" evidence="1">
    <location>
        <begin position="487"/>
        <end position="491"/>
    </location>
</feature>
<feature type="sequence variant">
    <original>N</original>
    <variation>A</variation>
    <location>
        <position position="310"/>
    </location>
</feature>
<evidence type="ECO:0000255" key="1">
    <source>
        <dbReference type="HAMAP-Rule" id="MF_04072"/>
    </source>
</evidence>
<evidence type="ECO:0000305" key="2"/>
<accession>P19697</accession>
<accession>Q67117</accession>
<proteinExistence type="inferred from homology"/>
<organismHost>
    <name type="scientific">Aves</name>
    <dbReference type="NCBI Taxonomy" id="8782"/>
</organismHost>
<organismHost>
    <name type="scientific">Sus scrofa</name>
    <name type="common">Pig</name>
    <dbReference type="NCBI Taxonomy" id="9823"/>
</organismHost>
<protein>
    <recommendedName>
        <fullName evidence="1">Hemagglutinin</fullName>
    </recommendedName>
    <component>
        <recommendedName>
            <fullName evidence="1">Hemagglutinin HA1 chain</fullName>
        </recommendedName>
    </component>
    <component>
        <recommendedName>
            <fullName evidence="1">Hemagglutinin HA2 chain</fullName>
        </recommendedName>
    </component>
</protein>
<comment type="function">
    <text>Binds to sialic acid-containing receptors on the cell surface, bringing about the attachment of the virus particle to the cell. This attachment induces virion internalization of about two third of the virus particles through clathrin-dependent endocytosis and about one third through a clathrin- and caveolin-independent pathway. Plays a major role in the determination of host range restriction and virulence. Class I viral fusion protein. Responsible for penetration of the virus into the cell cytoplasm by mediating the fusion of the membrane of the endocytosed virus particle with the endosomal membrane. Low pH in endosomes induces an irreversible conformational change in HA2, releasing the fusion hydrophobic peptide. Several trimers are required to form a competent fusion pore.</text>
</comment>
<comment type="function">
    <text evidence="1">Binds to sialic acid-containing receptors on the cell surface, bringing about the attachment of the virus particle to the cell. This attachment induces virion internalization either through clathrin-dependent endocytosis or through clathrin- and caveolin-independent pathway. Plays a major role in the determination of host range restriction and virulence. Class I viral fusion protein. Responsible for penetration of the virus into the cell cytoplasm by mediating the fusion of the membrane of the endocytosed virus particle with the endosomal membrane. Low pH in endosomes induces an irreversible conformational change in HA2, releasing the fusion hydrophobic peptide. Several trimers are required to form a competent fusion pore.</text>
</comment>
<comment type="subunit">
    <text evidence="1">Homotrimer of disulfide-linked HA1-HA2.</text>
</comment>
<comment type="subcellular location">
    <subcellularLocation>
        <location evidence="1">Virion membrane</location>
        <topology evidence="1">Single-pass type I membrane protein</topology>
    </subcellularLocation>
    <subcellularLocation>
        <location evidence="1">Host apical cell membrane</location>
        <topology evidence="1">Single-pass type I membrane protein</topology>
    </subcellularLocation>
    <text evidence="1">Targeted to the apical plasma membrane in epithelial polarized cells through a signal present in the transmembrane domain. Associated with glycosphingolipid- and cholesterol-enriched detergent-resistant lipid rafts.</text>
</comment>
<comment type="PTM">
    <text evidence="1">Palmitoylated.</text>
</comment>
<comment type="PTM">
    <text evidence="1">In natural infection, inactive HA is matured into HA1 and HA2 outside the cell by one or more trypsin-like, arginine-specific endoprotease secreted by the bronchial epithelial cells. One identified protease that may be involved in this process is secreted in lungs by club cells.</text>
</comment>
<comment type="miscellaneous">
    <text>Major glycoprotein, comprises over 80% of the envelope proteins present in virus particle.</text>
</comment>
<comment type="miscellaneous">
    <text>The extent of infection into host organism is determined by HA. Influenza viruses bud from the apical surface of polarized epithelial cells (e.g. bronchial epithelial cells) into lumen of lungs and are therefore usually pneumotropic. The reason is that HA is cleaved by tryptase clara which is restricted to lungs. However, HAs of H5 and H7 pantropic avian viruses subtypes can be cleaved by furin and subtilisin-type enzymes, allowing the virus to grow in other organs than lungs.</text>
</comment>
<comment type="miscellaneous">
    <text evidence="2">The influenza A genome consist of 8 RNA segments. Genetic variation of hemagglutinin and/or neuraminidase genes results in the emergence of new influenza strains. The mechanism of variation can be the result of point mutations or the result of genetic reassortment between segments of two different strains.</text>
</comment>
<comment type="similarity">
    <text evidence="1">Belongs to the influenza viruses hemagglutinin family.</text>
</comment>
<reference key="1">
    <citation type="journal article" date="1989" name="Virology">
        <title>Distinct lineages of influenza virus H4 hemagglutinin genes in different regions of the world.</title>
        <authorList>
            <person name="Donis R.O."/>
            <person name="Bean W.J."/>
            <person name="Kawaoka Y."/>
            <person name="Webster R.G."/>
        </authorList>
    </citation>
    <scope>NUCLEOTIDE SEQUENCE [GENOMIC RNA]</scope>
</reference>